<evidence type="ECO:0000255" key="1"/>
<evidence type="ECO:0000255" key="2">
    <source>
        <dbReference type="PROSITE-ProRule" id="PRU00192"/>
    </source>
</evidence>
<evidence type="ECO:0000255" key="3">
    <source>
        <dbReference type="PROSITE-ProRule" id="PRU00782"/>
    </source>
</evidence>
<evidence type="ECO:0000255" key="4">
    <source>
        <dbReference type="PROSITE-ProRule" id="PRU01093"/>
    </source>
</evidence>
<evidence type="ECO:0000256" key="5">
    <source>
        <dbReference type="SAM" id="MobiDB-lite"/>
    </source>
</evidence>
<evidence type="ECO:0000269" key="6">
    <source>
    </source>
</evidence>
<evidence type="ECO:0000269" key="7">
    <source>
    </source>
</evidence>
<evidence type="ECO:0000269" key="8">
    <source>
    </source>
</evidence>
<evidence type="ECO:0000269" key="9">
    <source>
    </source>
</evidence>
<evidence type="ECO:0000269" key="10">
    <source>
    </source>
</evidence>
<evidence type="ECO:0000269" key="11">
    <source>
    </source>
</evidence>
<evidence type="ECO:0000305" key="12"/>
<evidence type="ECO:0007829" key="13">
    <source>
        <dbReference type="PDB" id="5IBW"/>
    </source>
</evidence>
<name>MYOC_DICDI</name>
<dbReference type="EMBL" id="L35323">
    <property type="protein sequence ID" value="AAC37427.1"/>
    <property type="status" value="ALT_FRAME"/>
    <property type="molecule type" value="Genomic_DNA"/>
</dbReference>
<dbReference type="EMBL" id="AAFI02000016">
    <property type="protein sequence ID" value="EAL69121.1"/>
    <property type="molecule type" value="Genomic_DNA"/>
</dbReference>
<dbReference type="PIR" id="T30578">
    <property type="entry name" value="T30578"/>
</dbReference>
<dbReference type="RefSeq" id="XP_643060.1">
    <property type="nucleotide sequence ID" value="XM_637968.1"/>
</dbReference>
<dbReference type="PDB" id="5IBW">
    <property type="method" value="X-ray"/>
    <property type="resolution" value="1.90 A"/>
    <property type="chains" value="C=699-739"/>
</dbReference>
<dbReference type="PDBsum" id="5IBW"/>
<dbReference type="SMR" id="P42522"/>
<dbReference type="FunCoup" id="P42522">
    <property type="interactions" value="12"/>
</dbReference>
<dbReference type="STRING" id="44689.P42522"/>
<dbReference type="GlyGen" id="P42522">
    <property type="glycosylation" value="2 sites"/>
</dbReference>
<dbReference type="PaxDb" id="44689-DDB0215355"/>
<dbReference type="EnsemblProtists" id="EAL69121">
    <property type="protein sequence ID" value="EAL69121"/>
    <property type="gene ID" value="DDB_G0276617"/>
</dbReference>
<dbReference type="GeneID" id="8620597"/>
<dbReference type="KEGG" id="ddi:DDB_G0276617"/>
<dbReference type="dictyBase" id="DDB_G0276617">
    <property type="gene designation" value="myoC"/>
</dbReference>
<dbReference type="VEuPathDB" id="AmoebaDB:DDB_G0276617"/>
<dbReference type="eggNOG" id="KOG0162">
    <property type="taxonomic scope" value="Eukaryota"/>
</dbReference>
<dbReference type="HOGENOM" id="CLU_000192_7_6_1"/>
<dbReference type="InParanoid" id="P42522"/>
<dbReference type="OMA" id="KPMPTPG"/>
<dbReference type="PhylomeDB" id="P42522"/>
<dbReference type="PRO" id="PR:P42522"/>
<dbReference type="Proteomes" id="UP000002195">
    <property type="component" value="Chromosome 2"/>
</dbReference>
<dbReference type="GO" id="GO:0015629">
    <property type="term" value="C:actin cytoskeleton"/>
    <property type="evidence" value="ECO:0000318"/>
    <property type="project" value="GO_Central"/>
</dbReference>
<dbReference type="GO" id="GO:0062201">
    <property type="term" value="C:actin wave"/>
    <property type="evidence" value="ECO:0000314"/>
    <property type="project" value="dictyBase"/>
</dbReference>
<dbReference type="GO" id="GO:0031252">
    <property type="term" value="C:cell leading edge"/>
    <property type="evidence" value="ECO:0000314"/>
    <property type="project" value="dictyBase"/>
</dbReference>
<dbReference type="GO" id="GO:0005737">
    <property type="term" value="C:cytoplasm"/>
    <property type="evidence" value="ECO:0000318"/>
    <property type="project" value="GO_Central"/>
</dbReference>
<dbReference type="GO" id="GO:0005829">
    <property type="term" value="C:cytosol"/>
    <property type="evidence" value="ECO:0000314"/>
    <property type="project" value="dictyBase"/>
</dbReference>
<dbReference type="GO" id="GO:0030027">
    <property type="term" value="C:lamellipodium"/>
    <property type="evidence" value="ECO:0007669"/>
    <property type="project" value="UniProtKB-SubCell"/>
</dbReference>
<dbReference type="GO" id="GO:0070685">
    <property type="term" value="C:macropinocytic cup"/>
    <property type="evidence" value="ECO:0000314"/>
    <property type="project" value="dictyBase"/>
</dbReference>
<dbReference type="GO" id="GO:0070687">
    <property type="term" value="C:macropinocytic cup cytoskeleton"/>
    <property type="evidence" value="ECO:0000314"/>
    <property type="project" value="dictyBase"/>
</dbReference>
<dbReference type="GO" id="GO:1990498">
    <property type="term" value="C:mitotic spindle microtubule"/>
    <property type="evidence" value="ECO:0000314"/>
    <property type="project" value="dictyBase"/>
</dbReference>
<dbReference type="GO" id="GO:0016459">
    <property type="term" value="C:myosin complex"/>
    <property type="evidence" value="ECO:0007669"/>
    <property type="project" value="UniProtKB-KW"/>
</dbReference>
<dbReference type="GO" id="GO:0097203">
    <property type="term" value="C:phagocytic cup lip"/>
    <property type="evidence" value="ECO:0000314"/>
    <property type="project" value="dictyBase"/>
</dbReference>
<dbReference type="GO" id="GO:0005886">
    <property type="term" value="C:plasma membrane"/>
    <property type="evidence" value="ECO:0000314"/>
    <property type="project" value="dictyBase"/>
</dbReference>
<dbReference type="GO" id="GO:0051015">
    <property type="term" value="F:actin filament binding"/>
    <property type="evidence" value="ECO:0000314"/>
    <property type="project" value="dictyBase"/>
</dbReference>
<dbReference type="GO" id="GO:0005524">
    <property type="term" value="F:ATP binding"/>
    <property type="evidence" value="ECO:0007669"/>
    <property type="project" value="UniProtKB-KW"/>
</dbReference>
<dbReference type="GO" id="GO:0000146">
    <property type="term" value="F:microfilament motor activity"/>
    <property type="evidence" value="ECO:0000318"/>
    <property type="project" value="GO_Central"/>
</dbReference>
<dbReference type="GO" id="GO:0008017">
    <property type="term" value="F:microtubule binding"/>
    <property type="evidence" value="ECO:0000314"/>
    <property type="project" value="dictyBase"/>
</dbReference>
<dbReference type="GO" id="GO:0032027">
    <property type="term" value="F:myosin light chain binding"/>
    <property type="evidence" value="ECO:0000314"/>
    <property type="project" value="dictyBase"/>
</dbReference>
<dbReference type="GO" id="GO:0005543">
    <property type="term" value="F:phospholipid binding"/>
    <property type="evidence" value="ECO:0000314"/>
    <property type="project" value="dictyBase"/>
</dbReference>
<dbReference type="GO" id="GO:0051666">
    <property type="term" value="P:actin cortical patch localization"/>
    <property type="evidence" value="ECO:0000318"/>
    <property type="project" value="GO_Central"/>
</dbReference>
<dbReference type="GO" id="GO:0030036">
    <property type="term" value="P:actin cytoskeleton organization"/>
    <property type="evidence" value="ECO:0000316"/>
    <property type="project" value="dictyBase"/>
</dbReference>
<dbReference type="GO" id="GO:0007015">
    <property type="term" value="P:actin filament organization"/>
    <property type="evidence" value="ECO:0000318"/>
    <property type="project" value="GO_Central"/>
</dbReference>
<dbReference type="GO" id="GO:0048870">
    <property type="term" value="P:cell motility"/>
    <property type="evidence" value="ECO:0000316"/>
    <property type="project" value="dictyBase"/>
</dbReference>
<dbReference type="GO" id="GO:0006935">
    <property type="term" value="P:chemotaxis"/>
    <property type="evidence" value="ECO:0007669"/>
    <property type="project" value="UniProtKB-KW"/>
</dbReference>
<dbReference type="GO" id="GO:0006897">
    <property type="term" value="P:endocytosis"/>
    <property type="evidence" value="ECO:0000318"/>
    <property type="project" value="GO_Central"/>
</dbReference>
<dbReference type="GO" id="GO:0046847">
    <property type="term" value="P:filopodium assembly"/>
    <property type="evidence" value="ECO:0000316"/>
    <property type="project" value="dictyBase"/>
</dbReference>
<dbReference type="GO" id="GO:0007052">
    <property type="term" value="P:mitotic spindle organization"/>
    <property type="evidence" value="ECO:0000315"/>
    <property type="project" value="dictyBase"/>
</dbReference>
<dbReference type="GO" id="GO:0006909">
    <property type="term" value="P:phagocytosis"/>
    <property type="evidence" value="ECO:0000315"/>
    <property type="project" value="dictyBase"/>
</dbReference>
<dbReference type="GO" id="GO:0006907">
    <property type="term" value="P:pinocytosis"/>
    <property type="evidence" value="ECO:0000315"/>
    <property type="project" value="dictyBase"/>
</dbReference>
<dbReference type="CDD" id="cd01378">
    <property type="entry name" value="MYSc_Myo1"/>
    <property type="match status" value="1"/>
</dbReference>
<dbReference type="CDD" id="cd00174">
    <property type="entry name" value="SH3"/>
    <property type="match status" value="1"/>
</dbReference>
<dbReference type="FunFam" id="1.10.10.820:FF:000001">
    <property type="entry name" value="Myosin heavy chain"/>
    <property type="match status" value="1"/>
</dbReference>
<dbReference type="FunFam" id="1.20.120.720:FF:000015">
    <property type="entry name" value="Myosin I"/>
    <property type="match status" value="1"/>
</dbReference>
<dbReference type="FunFam" id="1.20.58.530:FF:000007">
    <property type="entry name" value="Myosin IE"/>
    <property type="match status" value="1"/>
</dbReference>
<dbReference type="Gene3D" id="1.10.10.820">
    <property type="match status" value="1"/>
</dbReference>
<dbReference type="Gene3D" id="1.20.58.530">
    <property type="match status" value="1"/>
</dbReference>
<dbReference type="Gene3D" id="6.20.240.20">
    <property type="match status" value="1"/>
</dbReference>
<dbReference type="Gene3D" id="3.40.850.10">
    <property type="entry name" value="Kinesin motor domain"/>
    <property type="match status" value="1"/>
</dbReference>
<dbReference type="Gene3D" id="1.20.120.720">
    <property type="entry name" value="Myosin VI head, motor domain, U50 subdomain"/>
    <property type="match status" value="1"/>
</dbReference>
<dbReference type="Gene3D" id="2.30.30.40">
    <property type="entry name" value="SH3 Domains"/>
    <property type="match status" value="1"/>
</dbReference>
<dbReference type="InterPro" id="IPR036961">
    <property type="entry name" value="Kinesin_motor_dom_sf"/>
</dbReference>
<dbReference type="InterPro" id="IPR001609">
    <property type="entry name" value="Myosin_head_motor_dom-like"/>
</dbReference>
<dbReference type="InterPro" id="IPR010926">
    <property type="entry name" value="Myosin_TH1"/>
</dbReference>
<dbReference type="InterPro" id="IPR036072">
    <property type="entry name" value="MYSc_Myo1"/>
</dbReference>
<dbReference type="InterPro" id="IPR027417">
    <property type="entry name" value="P-loop_NTPase"/>
</dbReference>
<dbReference type="InterPro" id="IPR036028">
    <property type="entry name" value="SH3-like_dom_sf"/>
</dbReference>
<dbReference type="InterPro" id="IPR001452">
    <property type="entry name" value="SH3_domain"/>
</dbReference>
<dbReference type="PANTHER" id="PTHR13140">
    <property type="entry name" value="MYOSIN"/>
    <property type="match status" value="1"/>
</dbReference>
<dbReference type="PANTHER" id="PTHR13140:SF837">
    <property type="entry name" value="MYOSIN-3-RELATED"/>
    <property type="match status" value="1"/>
</dbReference>
<dbReference type="Pfam" id="PF00063">
    <property type="entry name" value="Myosin_head"/>
    <property type="match status" value="1"/>
</dbReference>
<dbReference type="Pfam" id="PF06017">
    <property type="entry name" value="Myosin_TH1"/>
    <property type="match status" value="1"/>
</dbReference>
<dbReference type="Pfam" id="PF00018">
    <property type="entry name" value="SH3_1"/>
    <property type="match status" value="1"/>
</dbReference>
<dbReference type="PRINTS" id="PR00193">
    <property type="entry name" value="MYOSINHEAVY"/>
</dbReference>
<dbReference type="PRINTS" id="PR00452">
    <property type="entry name" value="SH3DOMAIN"/>
</dbReference>
<dbReference type="SMART" id="SM00242">
    <property type="entry name" value="MYSc"/>
    <property type="match status" value="1"/>
</dbReference>
<dbReference type="SMART" id="SM00326">
    <property type="entry name" value="SH3"/>
    <property type="match status" value="1"/>
</dbReference>
<dbReference type="SUPFAM" id="SSF52540">
    <property type="entry name" value="P-loop containing nucleoside triphosphate hydrolases"/>
    <property type="match status" value="1"/>
</dbReference>
<dbReference type="SUPFAM" id="SSF50044">
    <property type="entry name" value="SH3-domain"/>
    <property type="match status" value="1"/>
</dbReference>
<dbReference type="PROSITE" id="PS51456">
    <property type="entry name" value="MYOSIN_MOTOR"/>
    <property type="match status" value="1"/>
</dbReference>
<dbReference type="PROSITE" id="PS50002">
    <property type="entry name" value="SH3"/>
    <property type="match status" value="1"/>
</dbReference>
<dbReference type="PROSITE" id="PS51757">
    <property type="entry name" value="TH1"/>
    <property type="match status" value="1"/>
</dbReference>
<comment type="function">
    <text evidence="10">Myosin is a protein that binds to actin and has ATPase activity that is activated by actin. Involved in the process of phagocytosis and appears to support streaming behavior.</text>
</comment>
<comment type="subunit">
    <text>Myosin I heavy chain is single-headed. Dimer of a heavy and a light chain. Inability to self-assemble into filaments.</text>
</comment>
<comment type="subcellular location">
    <subcellularLocation>
        <location evidence="6 7 8 10">Cell projection</location>
        <location evidence="6 7 8 10">Lamellipodium</location>
    </subcellularLocation>
    <text>Found in the leading edge of translocating cells.</text>
</comment>
<comment type="disruption phenotype">
    <text evidence="9 10 11">Exhibits significant reduction in initial rate of phagocytosis. MyoB and myoC double mutant exhibits profound defects in growth, endocytosis and rearrangement of F-actin. myoB, myoC and myoD triple mutant exhibits reduction in the speed of whole cell translocation.</text>
</comment>
<comment type="similarity">
    <text evidence="12">Belongs to the TRAFAC class myosin-kinesin ATPase superfamily. Myosin family.</text>
</comment>
<comment type="sequence caution" evidence="12">
    <conflict type="frameshift">
        <sequence resource="EMBL-CDS" id="AAC37427"/>
    </conflict>
</comment>
<sequence>MAQQKPEWGNQMKNEGLDDMTLLSKVSNDQILDNLKKRFEKDIIYTNIGDVLISVNPFKFIDGMYSDEVLQEYIGKSRIELPPHVFAVAEQTYRSMINEKENQCVIISGESGAGKTEAAKKIMQYIADVSGERGSSSNQKVEHVKSIILETNPLLEAFGNAKTLRNNNSSRFGKYFEIQFNQKNEPEGGKITNYLLEKSRVVFQLKGERNFHIFYQFCRGATPQEQQEFGIYGPENFAYLTKGDTLDIDGVDDVEEFALTRNAMNVIGIPANEQKQIFKLLAAILWIGNIDFKEQAGDKVTIADTSVLDFVSQLLDVPSHFLKTALEFRQMETRHGNQRGTQYNVPLNKTQAIAGRDALAKAIYDRLFNWLVDRINKEMDNPQKGLMIGVLDIYGFEVFDRNGFEQFCINYVNEKLQQIFIEFTLKMEQEEYVREGIKWEPIPFFDNKIVCELIEGKNPPGIFSILDDVCRAVHSQAEGADQKLLQSIAVCKSNPHFDTRGNAFCVKHYAGDVVYEGPGMIEKNKDTLLKDHLEILQMSANNFLVGLFPDVIDTDSKKLPSTAGFKIKSQAAELVATLMKSTPHYIRTIKPNDLKKPNILEGGRVLHQVKYLGLLDNIKVRRAGFAYRATFDRFFQRYYLLSDKTCYAGNNIWKGDALSACRAILASQNVDNTQYQIGKTKIFIRYPEMLFSLEETRERYWHDMASRIKNAYRNYKAFQFECSNRIKNAFRNYKLYRQRCAQTIQGYFRAWKQASPFFDLRMQNEQLFQGRKERNRFSMISVRKYFGDYLDVRSQSYFLDAMAEGRNEDVIFSSKSQVMVHPILSANKLSPRFLIVTKQAIYLIKLKQKKNLATYLLDRRVPLAEVTSFSLSSLADNLLVIHTSTQFDVAVTTEFKTELVALINKQKGTTLAVNFGQSIQYFKKKGSNNTVTFLKDEMHKEIFLKKNQFHIASGLPASTTVAKVRKNPSQVSTPSKPIAKPVAKPMVAKPSGGSVIMKKPAPAAPPSGPPVMKKPAPTAPGGAPMMKKPAPAPGGAPMMKKPAPVPGGPAPGGSAIMKPAGGVSKPLPSPTGAPMMKKPAPTAPGGPAPAGAPTPMMKKPAGQPMMKPIAKPQPTPMKKPAAPPPQQYIALYEYDAMQPDELTFKENDVINLIKKVDADWWQGELVRTKQIGMLPSNYVQQI</sequence>
<proteinExistence type="evidence at protein level"/>
<accession>P42522</accession>
<accession>Q551D3</accession>
<gene>
    <name type="primary">myoC</name>
    <name type="synonym">dmiC</name>
    <name type="ORF">DDB_G0276617</name>
</gene>
<reference key="1">
    <citation type="journal article" date="1995" name="J. Cell Sci.">
        <title>Molecular genetic analysis of myoC, a Dictyostelium myosin I.</title>
        <authorList>
            <person name="Peterson M.D."/>
            <person name="Novak K.D."/>
            <person name="Reedy M.C."/>
            <person name="Ruman J.I."/>
            <person name="Titus M.A."/>
        </authorList>
    </citation>
    <scope>NUCLEOTIDE SEQUENCE [GENOMIC DNA]</scope>
    <source>
        <strain>AX2</strain>
    </source>
</reference>
<reference key="2">
    <citation type="journal article" date="2002" name="Nature">
        <title>Sequence and analysis of chromosome 2 of Dictyostelium discoideum.</title>
        <authorList>
            <person name="Gloeckner G."/>
            <person name="Eichinger L."/>
            <person name="Szafranski K."/>
            <person name="Pachebat J.A."/>
            <person name="Bankier A.T."/>
            <person name="Dear P.H."/>
            <person name="Lehmann R."/>
            <person name="Baumgart C."/>
            <person name="Parra G."/>
            <person name="Abril J.F."/>
            <person name="Guigo R."/>
            <person name="Kumpf K."/>
            <person name="Tunggal B."/>
            <person name="Cox E.C."/>
            <person name="Quail M.A."/>
            <person name="Platzer M."/>
            <person name="Rosenthal A."/>
            <person name="Noegel A.A."/>
        </authorList>
    </citation>
    <scope>NUCLEOTIDE SEQUENCE [LARGE SCALE GENOMIC DNA]</scope>
    <source>
        <strain>AX4</strain>
    </source>
</reference>
<reference key="3">
    <citation type="journal article" date="2005" name="Nature">
        <title>The genome of the social amoeba Dictyostelium discoideum.</title>
        <authorList>
            <person name="Eichinger L."/>
            <person name="Pachebat J.A."/>
            <person name="Gloeckner G."/>
            <person name="Rajandream M.A."/>
            <person name="Sucgang R."/>
            <person name="Berriman M."/>
            <person name="Song J."/>
            <person name="Olsen R."/>
            <person name="Szafranski K."/>
            <person name="Xu Q."/>
            <person name="Tunggal B."/>
            <person name="Kummerfeld S."/>
            <person name="Madera M."/>
            <person name="Konfortov B.A."/>
            <person name="Rivero F."/>
            <person name="Bankier A.T."/>
            <person name="Lehmann R."/>
            <person name="Hamlin N."/>
            <person name="Davies R."/>
            <person name="Gaudet P."/>
            <person name="Fey P."/>
            <person name="Pilcher K."/>
            <person name="Chen G."/>
            <person name="Saunders D."/>
            <person name="Sodergren E.J."/>
            <person name="Davis P."/>
            <person name="Kerhornou A."/>
            <person name="Nie X."/>
            <person name="Hall N."/>
            <person name="Anjard C."/>
            <person name="Hemphill L."/>
            <person name="Bason N."/>
            <person name="Farbrother P."/>
            <person name="Desany B."/>
            <person name="Just E."/>
            <person name="Morio T."/>
            <person name="Rost R."/>
            <person name="Churcher C.M."/>
            <person name="Cooper J."/>
            <person name="Haydock S."/>
            <person name="van Driessche N."/>
            <person name="Cronin A."/>
            <person name="Goodhead I."/>
            <person name="Muzny D.M."/>
            <person name="Mourier T."/>
            <person name="Pain A."/>
            <person name="Lu M."/>
            <person name="Harper D."/>
            <person name="Lindsay R."/>
            <person name="Hauser H."/>
            <person name="James K.D."/>
            <person name="Quiles M."/>
            <person name="Madan Babu M."/>
            <person name="Saito T."/>
            <person name="Buchrieser C."/>
            <person name="Wardroper A."/>
            <person name="Felder M."/>
            <person name="Thangavelu M."/>
            <person name="Johnson D."/>
            <person name="Knights A."/>
            <person name="Loulseged H."/>
            <person name="Mungall K.L."/>
            <person name="Oliver K."/>
            <person name="Price C."/>
            <person name="Quail M.A."/>
            <person name="Urushihara H."/>
            <person name="Hernandez J."/>
            <person name="Rabbinowitsch E."/>
            <person name="Steffen D."/>
            <person name="Sanders M."/>
            <person name="Ma J."/>
            <person name="Kohara Y."/>
            <person name="Sharp S."/>
            <person name="Simmonds M.N."/>
            <person name="Spiegler S."/>
            <person name="Tivey A."/>
            <person name="Sugano S."/>
            <person name="White B."/>
            <person name="Walker D."/>
            <person name="Woodward J.R."/>
            <person name="Winckler T."/>
            <person name="Tanaka Y."/>
            <person name="Shaulsky G."/>
            <person name="Schleicher M."/>
            <person name="Weinstock G.M."/>
            <person name="Rosenthal A."/>
            <person name="Cox E.C."/>
            <person name="Chisholm R.L."/>
            <person name="Gibbs R.A."/>
            <person name="Loomis W.F."/>
            <person name="Platzer M."/>
            <person name="Kay R.R."/>
            <person name="Williams J.G."/>
            <person name="Dear P.H."/>
            <person name="Noegel A.A."/>
            <person name="Barrell B.G."/>
            <person name="Kuspa A."/>
        </authorList>
    </citation>
    <scope>NUCLEOTIDE SEQUENCE [LARGE SCALE GENOMIC DNA]</scope>
    <source>
        <strain>AX4</strain>
    </source>
</reference>
<reference key="4">
    <citation type="journal article" date="1989" name="Nature">
        <title>Myosin I is located at the leading edges of locomoting Dictyostelium amoebae.</title>
        <authorList>
            <person name="Fukui Y."/>
            <person name="Lynch T.J."/>
            <person name="Brzeska H."/>
            <person name="Korn E.D."/>
        </authorList>
    </citation>
    <scope>SUBCELLULAR LOCATION</scope>
</reference>
<reference key="5">
    <citation type="journal article" date="1993" name="J. Biol. Chem.">
        <title>Sequence, expression pattern, intracellular localization, and targeted disruption of the Dictyostelium myosin ID heavy chain isoform.</title>
        <authorList>
            <person name="Jung G."/>
            <person name="Fukui Y."/>
            <person name="Martin B."/>
            <person name="Hammer J.A. III"/>
        </authorList>
    </citation>
    <scope>SUBCELLULAR LOCATION</scope>
</reference>
<reference key="6">
    <citation type="journal article" date="1995" name="J. Cell Biol.">
        <title>Dictyostelium myosin I double mutants exhibit conditional defects in pinocytosis.</title>
        <authorList>
            <person name="Novak K.D."/>
            <person name="Peterson M.D."/>
            <person name="Reedy M.C."/>
            <person name="Titus M.A."/>
        </authorList>
    </citation>
    <scope>DISRUPTION PHENOTYPE</scope>
</reference>
<reference key="7">
    <citation type="journal article" date="1996" name="J. Cell Biol.">
        <title>Dictyostelium mutants lacking multiple classic myosin I isoforms reveal combinations of shared and distinct functions.</title>
        <authorList>
            <person name="Jung G."/>
            <person name="Wu X."/>
            <person name="Hammer J.A. III"/>
        </authorList>
    </citation>
    <scope>SUBCELLULAR LOCATION</scope>
    <scope>DISRUPTION PHENOTYPE</scope>
    <scope>FUNCTION</scope>
</reference>
<reference key="8">
    <citation type="journal article" date="1998" name="Mol. Biol. Cell">
        <title>The myosin I SH3 domain and TEDS rule phosphorylation site are required for in vivo function.</title>
        <authorList>
            <person name="Novak K.D."/>
            <person name="Titus M.A."/>
        </authorList>
    </citation>
    <scope>DISRUPTION PHENOTYPE</scope>
</reference>
<reference key="9">
    <citation type="journal article" date="2001" name="J. Cell Biol.">
        <title>The Dictyostelium CARMIL protein links capping protein and the Arp2/3 complex to type I myosins through their SH3 domains.</title>
        <authorList>
            <person name="Jung G."/>
            <person name="Remmert K."/>
            <person name="Wu X."/>
            <person name="Volosky J.M."/>
            <person name="Hammer J.A. III"/>
        </authorList>
    </citation>
    <scope>SUBCELLULAR LOCATION</scope>
</reference>
<reference key="10">
    <citation type="journal article" date="2006" name="BMC Genomics">
        <title>Thirteen is enough: the myosins of Dictyostelium discoideum and their light chains.</title>
        <authorList>
            <person name="Kollmar M."/>
        </authorList>
    </citation>
    <scope>NOMENCLATURE</scope>
</reference>
<feature type="chain" id="PRO_0000123367" description="Myosin IC heavy chain">
    <location>
        <begin position="1"/>
        <end position="1182"/>
    </location>
</feature>
<feature type="domain" description="Myosin motor" evidence="3">
    <location>
        <begin position="15"/>
        <end position="698"/>
    </location>
</feature>
<feature type="domain" description="TH1" evidence="4">
    <location>
        <begin position="774"/>
        <end position="957"/>
    </location>
</feature>
<feature type="domain" description="SH3" evidence="2">
    <location>
        <begin position="1123"/>
        <end position="1182"/>
    </location>
</feature>
<feature type="region of interest" description="Actin-binding" evidence="3">
    <location>
        <begin position="571"/>
        <end position="593"/>
    </location>
</feature>
<feature type="region of interest" description="Disordered" evidence="5">
    <location>
        <begin position="999"/>
        <end position="1052"/>
    </location>
</feature>
<feature type="region of interest" description="Disordered" evidence="5">
    <location>
        <begin position="1064"/>
        <end position="1103"/>
    </location>
</feature>
<feature type="compositionally biased region" description="Low complexity" evidence="5">
    <location>
        <begin position="1013"/>
        <end position="1042"/>
    </location>
</feature>
<feature type="compositionally biased region" description="Pro residues" evidence="5">
    <location>
        <begin position="1081"/>
        <end position="1092"/>
    </location>
</feature>
<feature type="binding site" evidence="1">
    <location>
        <begin position="109"/>
        <end position="116"/>
    </location>
    <ligand>
        <name>ATP</name>
        <dbReference type="ChEBI" id="CHEBI:30616"/>
    </ligand>
</feature>
<feature type="helix" evidence="13">
    <location>
        <begin position="699"/>
        <end position="736"/>
    </location>
</feature>
<keyword id="KW-0002">3D-structure</keyword>
<keyword id="KW-0009">Actin-binding</keyword>
<keyword id="KW-0067">ATP-binding</keyword>
<keyword id="KW-0966">Cell projection</keyword>
<keyword id="KW-0145">Chemotaxis</keyword>
<keyword id="KW-0505">Motor protein</keyword>
<keyword id="KW-0518">Myosin</keyword>
<keyword id="KW-0547">Nucleotide-binding</keyword>
<keyword id="KW-1185">Reference proteome</keyword>
<keyword id="KW-0728">SH3 domain</keyword>
<organism>
    <name type="scientific">Dictyostelium discoideum</name>
    <name type="common">Social amoeba</name>
    <dbReference type="NCBI Taxonomy" id="44689"/>
    <lineage>
        <taxon>Eukaryota</taxon>
        <taxon>Amoebozoa</taxon>
        <taxon>Evosea</taxon>
        <taxon>Eumycetozoa</taxon>
        <taxon>Dictyostelia</taxon>
        <taxon>Dictyosteliales</taxon>
        <taxon>Dictyosteliaceae</taxon>
        <taxon>Dictyostelium</taxon>
    </lineage>
</organism>
<protein>
    <recommendedName>
        <fullName>Myosin IC heavy chain</fullName>
    </recommendedName>
</protein>